<keyword id="KW-0007">Acetylation</keyword>
<keyword id="KW-0025">Alternative splicing</keyword>
<keyword id="KW-0067">ATP-binding</keyword>
<keyword id="KW-0106">Calcium</keyword>
<keyword id="KW-0109">Calcium transport</keyword>
<keyword id="KW-0903">Direct protein sequencing</keyword>
<keyword id="KW-0256">Endoplasmic reticulum</keyword>
<keyword id="KW-0406">Ion transport</keyword>
<keyword id="KW-0460">Magnesium</keyword>
<keyword id="KW-0472">Membrane</keyword>
<keyword id="KW-0479">Metal-binding</keyword>
<keyword id="KW-0547">Nucleotide-binding</keyword>
<keyword id="KW-0539">Nucleus</keyword>
<keyword id="KW-0597">Phosphoprotein</keyword>
<keyword id="KW-1267">Proteomics identification</keyword>
<keyword id="KW-1185">Reference proteome</keyword>
<keyword id="KW-0703">Sarcoplasmic reticulum</keyword>
<keyword id="KW-1278">Translocase</keyword>
<keyword id="KW-0812">Transmembrane</keyword>
<keyword id="KW-1133">Transmembrane helix</keyword>
<keyword id="KW-0813">Transport</keyword>
<comment type="function">
    <text evidence="4 6">This magnesium-dependent enzyme catalyzes the hydrolysis of ATP coupled with the transport of calcium. Transports calcium ions from the cytosol into the sarcoplasmic/endoplasmic reticulum lumen. Contributes to calcium sequestration involved in muscular excitation/contraction.</text>
</comment>
<comment type="catalytic activity">
    <reaction evidence="6">
        <text>Ca(2+)(in) + ATP + H2O = Ca(2+)(out) + ADP + phosphate + H(+)</text>
        <dbReference type="Rhea" id="RHEA:18105"/>
        <dbReference type="ChEBI" id="CHEBI:15377"/>
        <dbReference type="ChEBI" id="CHEBI:15378"/>
        <dbReference type="ChEBI" id="CHEBI:29108"/>
        <dbReference type="ChEBI" id="CHEBI:30616"/>
        <dbReference type="ChEBI" id="CHEBI:43474"/>
        <dbReference type="ChEBI" id="CHEBI:456216"/>
        <dbReference type="EC" id="7.2.2.10"/>
    </reaction>
    <physiologicalReaction direction="left-to-right" evidence="6">
        <dbReference type="Rhea" id="RHEA:18106"/>
    </physiologicalReaction>
</comment>
<comment type="cofactor">
    <cofactor evidence="1">
        <name>Mg(2+)</name>
        <dbReference type="ChEBI" id="CHEBI:18420"/>
    </cofactor>
</comment>
<comment type="activity regulation">
    <text evidence="1 3">Inhibited by sarcolipin (SLN), phospholamban (PLN) and myoregulin (MRLN) (By similarity). Enhanced by DWORF; DWORF increases activity by displacing sarcolipin (SLN), phospholamban (PLN) and myoregulin (MRLN) (By similarity).</text>
</comment>
<comment type="subunit">
    <text evidence="1 3 8 9">Interacts with sarcolipin (SLN) (By similarity). Interacts with phospholamban (PLN) (By similarity). Interacts with myoregulin (MRLN). Interacts with DWORF (By similarity). Interacts with VMP1 (PubMed:28890335). Interacts with TUNAR; the interaction occurs at low levels in low glucose conditions and is increased by high glucose levels (PubMed:34513312).</text>
</comment>
<comment type="interaction">
    <interactant intactId="EBI-21505448">
        <id>Q93084-2</id>
    </interactant>
    <interactant intactId="EBI-296151">
        <id>P37173</id>
        <label>TGFBR2</label>
    </interactant>
    <organismsDiffer>false</organismsDiffer>
    <experiments>3</experiments>
</comment>
<comment type="subcellular location">
    <subcellularLocation>
        <location evidence="6">Nucleus membrane</location>
        <topology evidence="6">Multi-pass membrane protein</topology>
    </subcellularLocation>
    <subcellularLocation>
        <location evidence="6">Endoplasmic reticulum membrane</location>
        <topology evidence="6">Multi-pass membrane protein</topology>
    </subcellularLocation>
    <subcellularLocation>
        <location evidence="6">Sarcoplasmic reticulum membrane</location>
        <topology evidence="6">Multi-pass membrane protein</topology>
    </subcellularLocation>
</comment>
<comment type="alternative products">
    <event type="alternative splicing"/>
    <isoform>
        <id>Q93084-2</id>
        <name>SERCA3A</name>
        <name>HuS3-II</name>
        <sequence type="displayed"/>
    </isoform>
    <isoform>
        <id>Q93084-1</id>
        <name>SERCA3B</name>
        <sequence type="described" ref="VSP_060845"/>
    </isoform>
    <isoform>
        <id>Q93084-3</id>
        <name>SERCA3C</name>
        <name>HuS3-IV</name>
        <sequence type="described" ref="VSP_060847"/>
    </isoform>
    <isoform>
        <id>Q93084-4</id>
        <name>SERCA3G</name>
        <name>HuS3-I</name>
        <sequence type="described" ref="VSP_060849"/>
    </isoform>
    <isoform>
        <id>Q93084-5</id>
        <name>SERCA3E</name>
        <sequence type="described" ref="VSP_060844"/>
    </isoform>
    <isoform>
        <id>Q93084-6</id>
        <name>SERCA3D</name>
        <sequence type="described" ref="VSP_060848"/>
    </isoform>
    <isoform>
        <id>Q93084-7</id>
        <name>SERCA3F</name>
        <sequence type="described" ref="VSP_060846"/>
    </isoform>
    <text>The same names have been attributed to different isoforms.</text>
</comment>
<comment type="tissue specificity">
    <text evidence="4 6">Found in most tissues. Most abundant in thymus, trachea, salivary gland, spleen, bone marrow, lymph node, peripheral leukocytes, pancreas and colon. Also detected in fetal tissues. Expressed in cell lineages of hematopoietic, epithelial, or embryonic origin and also expressed in several cancer cell lines.</text>
</comment>
<comment type="similarity">
    <text evidence="11">Belongs to the cation transport ATPase (P-type) (TC 3.A.3) family. Type IIA subfamily.</text>
</comment>
<organism>
    <name type="scientific">Homo sapiens</name>
    <name type="common">Human</name>
    <dbReference type="NCBI Taxonomy" id="9606"/>
    <lineage>
        <taxon>Eukaryota</taxon>
        <taxon>Metazoa</taxon>
        <taxon>Chordata</taxon>
        <taxon>Craniata</taxon>
        <taxon>Vertebrata</taxon>
        <taxon>Euteleostomi</taxon>
        <taxon>Mammalia</taxon>
        <taxon>Eutheria</taxon>
        <taxon>Euarchontoglires</taxon>
        <taxon>Primates</taxon>
        <taxon>Haplorrhini</taxon>
        <taxon>Catarrhini</taxon>
        <taxon>Hominidae</taxon>
        <taxon>Homo</taxon>
    </lineage>
</organism>
<reference key="1">
    <citation type="journal article" date="1996" name="Biochem. J.">
        <title>cDNA cloning, expression and chromosomal localization of the human sarco/endoplasmic reticulum Ca(2+)-ATPase 3 gene.</title>
        <authorList>
            <person name="Dode L."/>
            <person name="Wuytack F."/>
            <person name="Kools P.F.J."/>
            <person name="Baba-Aissa F."/>
            <person name="Raeymaekers L."/>
            <person name="Brik F."/>
            <person name="van de Ven W.J.M."/>
            <person name="Casteels R."/>
        </authorList>
    </citation>
    <scope>NUCLEOTIDE SEQUENCE [GENOMIC DNA / MRNA] (ISOFORM SERCA3A)</scope>
    <source>
        <tissue>Leukemic T-cell</tissue>
    </source>
</reference>
<reference key="2">
    <citation type="journal article" date="1996" name="Biochem. J.">
        <authorList>
            <person name="Dode L."/>
            <person name="Wuytack F."/>
            <person name="Kools P.F.J."/>
            <person name="Baba-Aissa F."/>
            <person name="Raeymaekers L."/>
            <person name="Brik F."/>
            <person name="van de Ven W.J.M."/>
            <person name="Casteels R."/>
        </authorList>
    </citation>
    <scope>ERRATUM OF PUBMED:8809064</scope>
</reference>
<reference key="3">
    <citation type="journal article" date="1998" name="J. Biol. Chem.">
        <title>Structure of the human sarco/endoplasmic reticulum Ca2+-ATPase 3 gene. Promoter analysis and alternative splicing of the SERCA3 pre-mRNA.</title>
        <authorList>
            <person name="Dode L."/>
            <person name="De Greef C."/>
            <person name="Mountian I."/>
            <person name="Attard M."/>
            <person name="Town M.M."/>
            <person name="Casteels R."/>
            <person name="Wuytack F."/>
        </authorList>
    </citation>
    <scope>NUCLEOTIDE SEQUENCE [GENOMIC DNA] (ISOFORMS SERCA3B AND SERCA3C)</scope>
</reference>
<reference key="4">
    <citation type="journal article" date="1998" name="Am. J. Physiol.">
        <title>Functional characterization of alternatively spliced human SERCA3 transcripts.</title>
        <authorList>
            <person name="Poch E."/>
            <person name="Leach S."/>
            <person name="Snape S."/>
            <person name="Cacic T."/>
            <person name="McLennan D.H."/>
            <person name="Lytton J."/>
        </authorList>
    </citation>
    <scope>NUCLEOTIDE SEQUENCE [MRNA] (ISOFORMS SERCA3A; SERCA3C AND SERCA3G)</scope>
    <source>
        <tissue>Kidney</tissue>
        <tissue>Leukemic T-cell</tissue>
    </source>
</reference>
<reference key="5">
    <citation type="journal article" date="2006" name="Nature">
        <title>DNA sequence of human chromosome 17 and analysis of rearrangement in the human lineage.</title>
        <authorList>
            <person name="Zody M.C."/>
            <person name="Garber M."/>
            <person name="Adams D.J."/>
            <person name="Sharpe T."/>
            <person name="Harrow J."/>
            <person name="Lupski J.R."/>
            <person name="Nicholson C."/>
            <person name="Searle S.M."/>
            <person name="Wilming L."/>
            <person name="Young S.K."/>
            <person name="Abouelleil A."/>
            <person name="Allen N.R."/>
            <person name="Bi W."/>
            <person name="Bloom T."/>
            <person name="Borowsky M.L."/>
            <person name="Bugalter B.E."/>
            <person name="Butler J."/>
            <person name="Chang J.L."/>
            <person name="Chen C.-K."/>
            <person name="Cook A."/>
            <person name="Corum B."/>
            <person name="Cuomo C.A."/>
            <person name="de Jong P.J."/>
            <person name="DeCaprio D."/>
            <person name="Dewar K."/>
            <person name="FitzGerald M."/>
            <person name="Gilbert J."/>
            <person name="Gibson R."/>
            <person name="Gnerre S."/>
            <person name="Goldstein S."/>
            <person name="Grafham D.V."/>
            <person name="Grocock R."/>
            <person name="Hafez N."/>
            <person name="Hagopian D.S."/>
            <person name="Hart E."/>
            <person name="Norman C.H."/>
            <person name="Humphray S."/>
            <person name="Jaffe D.B."/>
            <person name="Jones M."/>
            <person name="Kamal M."/>
            <person name="Khodiyar V.K."/>
            <person name="LaButti K."/>
            <person name="Laird G."/>
            <person name="Lehoczky J."/>
            <person name="Liu X."/>
            <person name="Lokyitsang T."/>
            <person name="Loveland J."/>
            <person name="Lui A."/>
            <person name="Macdonald P."/>
            <person name="Major J.E."/>
            <person name="Matthews L."/>
            <person name="Mauceli E."/>
            <person name="McCarroll S.A."/>
            <person name="Mihalev A.H."/>
            <person name="Mudge J."/>
            <person name="Nguyen C."/>
            <person name="Nicol R."/>
            <person name="O'Leary S.B."/>
            <person name="Osoegawa K."/>
            <person name="Schwartz D.C."/>
            <person name="Shaw-Smith C."/>
            <person name="Stankiewicz P."/>
            <person name="Steward C."/>
            <person name="Swarbreck D."/>
            <person name="Venkataraman V."/>
            <person name="Whittaker C.A."/>
            <person name="Yang X."/>
            <person name="Zimmer A.R."/>
            <person name="Bradley A."/>
            <person name="Hubbard T."/>
            <person name="Birren B.W."/>
            <person name="Rogers J."/>
            <person name="Lander E.S."/>
            <person name="Nusbaum C."/>
        </authorList>
    </citation>
    <scope>NUCLEOTIDE SEQUENCE [LARGE SCALE GENOMIC DNA]</scope>
</reference>
<reference key="6">
    <citation type="submission" date="2005-09" db="EMBL/GenBank/DDBJ databases">
        <authorList>
            <person name="Mural R.J."/>
            <person name="Istrail S."/>
            <person name="Sutton G.G."/>
            <person name="Florea L."/>
            <person name="Halpern A.L."/>
            <person name="Mobarry C.M."/>
            <person name="Lippert R."/>
            <person name="Walenz B."/>
            <person name="Shatkay H."/>
            <person name="Dew I."/>
            <person name="Miller J.R."/>
            <person name="Flanigan M.J."/>
            <person name="Edwards N.J."/>
            <person name="Bolanos R."/>
            <person name="Fasulo D."/>
            <person name="Halldorsson B.V."/>
            <person name="Hannenhalli S."/>
            <person name="Turner R."/>
            <person name="Yooseph S."/>
            <person name="Lu F."/>
            <person name="Nusskern D.R."/>
            <person name="Shue B.C."/>
            <person name="Zheng X.H."/>
            <person name="Zhong F."/>
            <person name="Delcher A.L."/>
            <person name="Huson D.H."/>
            <person name="Kravitz S.A."/>
            <person name="Mouchard L."/>
            <person name="Reinert K."/>
            <person name="Remington K.A."/>
            <person name="Clark A.G."/>
            <person name="Waterman M.S."/>
            <person name="Eichler E.E."/>
            <person name="Adams M.D."/>
            <person name="Hunkapiller M.W."/>
            <person name="Myers E.W."/>
            <person name="Venter J.C."/>
        </authorList>
    </citation>
    <scope>NUCLEOTIDE SEQUENCE [LARGE SCALE GENOMIC DNA]</scope>
</reference>
<reference key="7">
    <citation type="journal article" date="2004" name="Genome Res.">
        <title>The status, quality, and expansion of the NIH full-length cDNA project: the Mammalian Gene Collection (MGC).</title>
        <authorList>
            <consortium name="The MGC Project Team"/>
        </authorList>
    </citation>
    <scope>NUCLEOTIDE SEQUENCE [LARGE SCALE MRNA] (ISOFORM SERCA3A)</scope>
    <source>
        <tissue>Ovary</tissue>
    </source>
</reference>
<reference key="8">
    <citation type="journal article" date="2003" name="Nat. Biotechnol.">
        <title>Exploring proteomes and analyzing protein processing by mass spectrometric identification of sorted N-terminal peptides.</title>
        <authorList>
            <person name="Gevaert K."/>
            <person name="Goethals M."/>
            <person name="Martens L."/>
            <person name="Van Damme J."/>
            <person name="Staes A."/>
            <person name="Thomas G.R."/>
            <person name="Vandekerckhove J."/>
        </authorList>
    </citation>
    <scope>PROTEIN SEQUENCE OF 1-14</scope>
    <scope>ACETYLATION AT MET-1</scope>
    <source>
        <tissue>Platelet</tissue>
    </source>
</reference>
<reference key="9">
    <citation type="submission" date="2005-11" db="UniProtKB">
        <authorList>
            <person name="Bienvenut W.V."/>
            <person name="Claeys D."/>
        </authorList>
    </citation>
    <scope>PROTEIN SEQUENCE OF 1-33; 111-120; 219-234; 482-489; 516-524; 549-560 AND 657-667</scope>
    <scope>ACETYLATION AT MET-1</scope>
    <scope>IDENTIFICATION BY MASS SPECTROMETRY</scope>
    <source>
        <tissue>Platelet</tissue>
    </source>
</reference>
<reference key="10">
    <citation type="journal article" date="1994" name="J. Biol. Chem.">
        <title>A sarco/endoplasmic reticulum Ca(2+)-ATPase 3-type Ca2+ pump is expressed in platelets, in lymphoid cells, and in mast cells.</title>
        <authorList>
            <person name="Wuytack F."/>
            <person name="Papp B."/>
            <person name="Verboomen H."/>
            <person name="Raeymaekers L."/>
            <person name="Dode L."/>
            <person name="Bobe R."/>
            <person name="Enouf J."/>
            <person name="Bokkala S."/>
            <person name="Authi K.S."/>
            <person name="Casteels R."/>
        </authorList>
    </citation>
    <scope>NUCLEOTIDE SEQUENCE [MRNA] OF 454-509</scope>
</reference>
<reference key="11">
    <citation type="journal article" date="2002" name="J. Biol. Chem.">
        <title>Three novel sarco/endoplasmic reticulum Ca2+-ATPase (SERCA) 3 isoforms. Expression, regulation, and function of the membranes of the SERCA3 family.</title>
        <authorList>
            <person name="Martin V."/>
            <person name="Bredoux R."/>
            <person name="Corvazier E."/>
            <person name="Van Gorp R."/>
            <person name="Kovacs T."/>
            <person name="Gelebart P."/>
            <person name="Enouf J."/>
        </authorList>
    </citation>
    <scope>NUCLEOTIDE SEQUENCE [MRNA] OF 892-999 (ISOFORMS SERCA3E AND SERCA3D)</scope>
    <scope>ALTERNATIVE SPLICING</scope>
    <scope>FUNCTION</scope>
    <scope>TISSUE SPECIFICITY</scope>
</reference>
<reference key="12">
    <citation type="journal article" date="2004" name="J. Biol. Chem.">
        <title>Identification, expression, function, and localization of a novel (sixth) isoform of the human sarco/endoplasmic reticulum Ca2+ATPase 3 gene.</title>
        <authorList>
            <person name="Bobe R."/>
            <person name="Bredoux R."/>
            <person name="Corvazier E."/>
            <person name="Andersen J.P."/>
            <person name="Clausen J.D."/>
            <person name="Dode L."/>
            <person name="Kovacs T."/>
            <person name="Enouf J."/>
        </authorList>
    </citation>
    <scope>NUCLEOTIDE SEQUENCE [MRNA] OF 892-999 (ISOFORM SERCA3F)</scope>
    <scope>ALTERNATIVE SPLICING</scope>
    <scope>FUNCTION</scope>
    <scope>SUBCELLULAR LOCATION</scope>
    <scope>TISSUE SPECIFICITY</scope>
    <scope>CATALYTIC ACTIVITY</scope>
</reference>
<reference key="13">
    <citation type="journal article" date="2009" name="Sci. Signal.">
        <title>Quantitative phosphoproteomic analysis of T cell receptor signaling reveals system-wide modulation of protein-protein interactions.</title>
        <authorList>
            <person name="Mayya V."/>
            <person name="Lundgren D.H."/>
            <person name="Hwang S.-I."/>
            <person name="Rezaul K."/>
            <person name="Wu L."/>
            <person name="Eng J.K."/>
            <person name="Rodionov V."/>
            <person name="Han D.K."/>
        </authorList>
    </citation>
    <scope>PHOSPHORYLATION [LARGE SCALE ANALYSIS] AT SER-662</scope>
    <scope>IDENTIFICATION BY MASS SPECTROMETRY [LARGE SCALE ANALYSIS]</scope>
    <source>
        <tissue>Leukemic T-cell</tissue>
    </source>
</reference>
<reference key="14">
    <citation type="journal article" date="2011" name="BMC Syst. Biol.">
        <title>Initial characterization of the human central proteome.</title>
        <authorList>
            <person name="Burkard T.R."/>
            <person name="Planyavsky M."/>
            <person name="Kaupe I."/>
            <person name="Breitwieser F.P."/>
            <person name="Buerckstuemmer T."/>
            <person name="Bennett K.L."/>
            <person name="Superti-Furga G."/>
            <person name="Colinge J."/>
        </authorList>
    </citation>
    <scope>IDENTIFICATION BY MASS SPECTROMETRY [LARGE SCALE ANALYSIS]</scope>
</reference>
<reference key="15">
    <citation type="journal article" date="2013" name="J. Proteome Res.">
        <title>Toward a comprehensive characterization of a human cancer cell phosphoproteome.</title>
        <authorList>
            <person name="Zhou H."/>
            <person name="Di Palma S."/>
            <person name="Preisinger C."/>
            <person name="Peng M."/>
            <person name="Polat A.N."/>
            <person name="Heck A.J."/>
            <person name="Mohammed S."/>
        </authorList>
    </citation>
    <scope>PHOSPHORYLATION [LARGE SCALE ANALYSIS] AT SER-662</scope>
    <scope>IDENTIFICATION BY MASS SPECTROMETRY [LARGE SCALE ANALYSIS]</scope>
    <source>
        <tissue>Erythroleukemia</tissue>
    </source>
</reference>
<reference key="16">
    <citation type="journal article" date="2017" name="Mol. Cell">
        <title>The ER-Localized Transmembrane Protein EPG-3/VMP1 Regulates SERCA Activity to Control ER-Isolation Membrane Contacts for Autophagosome Formation.</title>
        <authorList>
            <person name="Zhao Y.G."/>
            <person name="Chen Y."/>
            <person name="Miao G."/>
            <person name="Zhao H."/>
            <person name="Qu W."/>
            <person name="Li D."/>
            <person name="Wang Z."/>
            <person name="Liu N."/>
            <person name="Li L."/>
            <person name="Chen S."/>
            <person name="Liu P."/>
            <person name="Feng D."/>
            <person name="Zhang H."/>
        </authorList>
    </citation>
    <scope>INTERACTION WITH VMP1</scope>
</reference>
<reference key="17">
    <citation type="journal article" date="2021" name="Mol. Ther. Nucleic Acids">
        <title>A putative long noncoding RNA-encoded micropeptide maintains cellular homeostasis in pancreatic beta cells.</title>
        <authorList>
            <person name="Li M."/>
            <person name="Shao F."/>
            <person name="Qian Q."/>
            <person name="Yu W."/>
            <person name="Zhang Z."/>
            <person name="Chen B."/>
            <person name="Su D."/>
            <person name="Guo Y."/>
            <person name="Phan A.V."/>
            <person name="Song L.S."/>
            <person name="Stephens S.B."/>
            <person name="Sebag J."/>
            <person name="Imai Y."/>
            <person name="Yang L."/>
            <person name="Cao H."/>
        </authorList>
    </citation>
    <scope>INTERACTION WITH TUNAR</scope>
</reference>
<reference key="18">
    <citation type="journal article" date="2006" name="Science">
        <title>The consensus coding sequences of human breast and colorectal cancers.</title>
        <authorList>
            <person name="Sjoeblom T."/>
            <person name="Jones S."/>
            <person name="Wood L.D."/>
            <person name="Parsons D.W."/>
            <person name="Lin J."/>
            <person name="Barber T.D."/>
            <person name="Mandelker D."/>
            <person name="Leary R.J."/>
            <person name="Ptak J."/>
            <person name="Silliman N."/>
            <person name="Szabo S."/>
            <person name="Buckhaults P."/>
            <person name="Farrell C."/>
            <person name="Meeh P."/>
            <person name="Markowitz S.D."/>
            <person name="Willis J."/>
            <person name="Dawson D."/>
            <person name="Willson J.K.V."/>
            <person name="Gazdar A.F."/>
            <person name="Hartigan J."/>
            <person name="Wu L."/>
            <person name="Liu C."/>
            <person name="Parmigiani G."/>
            <person name="Park B.H."/>
            <person name="Bachman K.E."/>
            <person name="Papadopoulos N."/>
            <person name="Vogelstein B."/>
            <person name="Kinzler K.W."/>
            <person name="Velculescu V.E."/>
        </authorList>
    </citation>
    <scope>VARIANT [LARGE SCALE ANALYSIS] HIS-674</scope>
</reference>
<evidence type="ECO:0000250" key="1">
    <source>
        <dbReference type="UniProtKB" id="P04191"/>
    </source>
</evidence>
<evidence type="ECO:0000250" key="2">
    <source>
        <dbReference type="UniProtKB" id="Q64518"/>
    </source>
</evidence>
<evidence type="ECO:0000250" key="3">
    <source>
        <dbReference type="UniProtKB" id="Q8R429"/>
    </source>
</evidence>
<evidence type="ECO:0000269" key="4">
    <source>
    </source>
</evidence>
<evidence type="ECO:0000269" key="5">
    <source>
    </source>
</evidence>
<evidence type="ECO:0000269" key="6">
    <source>
    </source>
</evidence>
<evidence type="ECO:0000269" key="7">
    <source>
    </source>
</evidence>
<evidence type="ECO:0000269" key="8">
    <source>
    </source>
</evidence>
<evidence type="ECO:0000269" key="9">
    <source>
    </source>
</evidence>
<evidence type="ECO:0000269" key="10">
    <source ref="9"/>
</evidence>
<evidence type="ECO:0000305" key="11"/>
<evidence type="ECO:0000312" key="12">
    <source>
        <dbReference type="HGNC" id="HGNC:813"/>
    </source>
</evidence>
<evidence type="ECO:0007744" key="13">
    <source>
    </source>
</evidence>
<evidence type="ECO:0007744" key="14">
    <source>
    </source>
</evidence>
<accession>Q93084</accession>
<accession>A8MZG0</accession>
<accession>D3DTJ8</accession>
<accession>O60900</accession>
<accession>O60901</accession>
<accession>O75501</accession>
<accession>O75502</accession>
<accession>Q16115</accession>
<accession>Q6JHX1</accession>
<accession>Q8TEX5</accession>
<accession>Q8TEX6</accession>
<dbReference type="EC" id="7.2.2.10" evidence="6"/>
<dbReference type="EMBL" id="Z69881">
    <property type="protein sequence ID" value="CAA93737.1"/>
    <property type="molecule type" value="mRNA"/>
</dbReference>
<dbReference type="EMBL" id="Z69880">
    <property type="protein sequence ID" value="CAA93736.1"/>
    <property type="molecule type" value="Genomic_DNA"/>
</dbReference>
<dbReference type="EMBL" id="Y15724">
    <property type="protein sequence ID" value="CAA75739.1"/>
    <property type="molecule type" value="Genomic_DNA"/>
</dbReference>
<dbReference type="EMBL" id="Y15725">
    <property type="protein sequence ID" value="CAA75739.1"/>
    <property type="status" value="JOINED"/>
    <property type="molecule type" value="Genomic_DNA"/>
</dbReference>
<dbReference type="EMBL" id="Y15726">
    <property type="protein sequence ID" value="CAA75739.1"/>
    <property type="status" value="JOINED"/>
    <property type="molecule type" value="Genomic_DNA"/>
</dbReference>
<dbReference type="EMBL" id="Y15727">
    <property type="protein sequence ID" value="CAA75739.1"/>
    <property type="status" value="JOINED"/>
    <property type="molecule type" value="Genomic_DNA"/>
</dbReference>
<dbReference type="EMBL" id="Y15728">
    <property type="protein sequence ID" value="CAA75739.1"/>
    <property type="status" value="JOINED"/>
    <property type="molecule type" value="Genomic_DNA"/>
</dbReference>
<dbReference type="EMBL" id="Y15729">
    <property type="protein sequence ID" value="CAA75739.1"/>
    <property type="status" value="JOINED"/>
    <property type="molecule type" value="Genomic_DNA"/>
</dbReference>
<dbReference type="EMBL" id="Y15730">
    <property type="protein sequence ID" value="CAA75739.1"/>
    <property type="status" value="JOINED"/>
    <property type="molecule type" value="Genomic_DNA"/>
</dbReference>
<dbReference type="EMBL" id="Y15738">
    <property type="protein sequence ID" value="CAA75748.1"/>
    <property type="molecule type" value="Genomic_DNA"/>
</dbReference>
<dbReference type="EMBL" id="Y15737">
    <property type="protein sequence ID" value="CAA75747.1"/>
    <property type="molecule type" value="Genomic_DNA"/>
</dbReference>
<dbReference type="EMBL" id="AF068220">
    <property type="protein sequence ID" value="AAC24525.1"/>
    <property type="molecule type" value="mRNA"/>
</dbReference>
<dbReference type="EMBL" id="AF068221">
    <property type="protein sequence ID" value="AAC24526.1"/>
    <property type="molecule type" value="mRNA"/>
</dbReference>
<dbReference type="EMBL" id="AC005940">
    <property type="status" value="NOT_ANNOTATED_CDS"/>
    <property type="molecule type" value="Genomic_DNA"/>
</dbReference>
<dbReference type="EMBL" id="CH471108">
    <property type="protein sequence ID" value="EAW90468.1"/>
    <property type="molecule type" value="Genomic_DNA"/>
</dbReference>
<dbReference type="EMBL" id="CH471108">
    <property type="protein sequence ID" value="EAW90463.1"/>
    <property type="molecule type" value="Genomic_DNA"/>
</dbReference>
<dbReference type="EMBL" id="CH471108">
    <property type="protein sequence ID" value="EAW90469.1"/>
    <property type="molecule type" value="Genomic_DNA"/>
</dbReference>
<dbReference type="EMBL" id="BC035729">
    <property type="protein sequence ID" value="AAH35729.1"/>
    <property type="molecule type" value="mRNA"/>
</dbReference>
<dbReference type="EMBL" id="S68239">
    <property type="protein sequence ID" value="AAB29700.1"/>
    <property type="molecule type" value="mRNA"/>
</dbReference>
<dbReference type="EMBL" id="AF458228">
    <property type="protein sequence ID" value="AAL78967.1"/>
    <property type="molecule type" value="mRNA"/>
</dbReference>
<dbReference type="EMBL" id="AF458229">
    <property type="protein sequence ID" value="AAL78968.1"/>
    <property type="molecule type" value="mRNA"/>
</dbReference>
<dbReference type="EMBL" id="AY460339">
    <property type="protein sequence ID" value="AAR15415.1"/>
    <property type="molecule type" value="mRNA"/>
</dbReference>
<dbReference type="CCDS" id="CCDS11041.1">
    <molecule id="Q93084-1"/>
</dbReference>
<dbReference type="CCDS" id="CCDS11042.1">
    <molecule id="Q93084-5"/>
</dbReference>
<dbReference type="CCDS" id="CCDS42234.1">
    <molecule id="Q93084-3"/>
</dbReference>
<dbReference type="CCDS" id="CCDS45579.1">
    <molecule id="Q93084-2"/>
</dbReference>
<dbReference type="CCDS" id="CCDS45580.1">
    <molecule id="Q93084-4"/>
</dbReference>
<dbReference type="PIR" id="I55399">
    <property type="entry name" value="I55399"/>
</dbReference>
<dbReference type="PIR" id="S72267">
    <property type="entry name" value="S72267"/>
</dbReference>
<dbReference type="RefSeq" id="NP_005164.2">
    <molecule id="Q93084-2"/>
    <property type="nucleotide sequence ID" value="NM_005173.3"/>
</dbReference>
<dbReference type="RefSeq" id="NP_777613.1">
    <molecule id="Q93084-5"/>
    <property type="nucleotide sequence ID" value="NM_174953.3"/>
</dbReference>
<dbReference type="RefSeq" id="NP_777614.1">
    <molecule id="Q93084-6"/>
    <property type="nucleotide sequence ID" value="NM_174954.3"/>
</dbReference>
<dbReference type="RefSeq" id="NP_777615.1">
    <molecule id="Q93084-1"/>
    <property type="nucleotide sequence ID" value="NM_174955.3"/>
</dbReference>
<dbReference type="RefSeq" id="NP_777616.1">
    <molecule id="Q93084-3"/>
    <property type="nucleotide sequence ID" value="NM_174956.3"/>
</dbReference>
<dbReference type="RefSeq" id="NP_777617.1">
    <molecule id="Q93084-4"/>
    <property type="nucleotide sequence ID" value="NM_174957.3"/>
</dbReference>
<dbReference type="RefSeq" id="NP_777618.1">
    <molecule id="Q93084-3"/>
    <property type="nucleotide sequence ID" value="NM_174958.3"/>
</dbReference>
<dbReference type="RefSeq" id="XP_047292109.1">
    <molecule id="Q93084-4"/>
    <property type="nucleotide sequence ID" value="XM_047436153.1"/>
</dbReference>
<dbReference type="RefSeq" id="XP_054172256.1">
    <molecule id="Q93084-4"/>
    <property type="nucleotide sequence ID" value="XM_054316281.1"/>
</dbReference>
<dbReference type="SMR" id="Q93084"/>
<dbReference type="BioGRID" id="106979">
    <property type="interactions" value="308"/>
</dbReference>
<dbReference type="FunCoup" id="Q93084">
    <property type="interactions" value="2285"/>
</dbReference>
<dbReference type="IntAct" id="Q93084">
    <property type="interactions" value="220"/>
</dbReference>
<dbReference type="MINT" id="Q93084"/>
<dbReference type="STRING" id="9606.ENSP00000353072"/>
<dbReference type="BindingDB" id="Q93084"/>
<dbReference type="ChEMBL" id="CHEMBL2401"/>
<dbReference type="GlyGen" id="Q93084">
    <property type="glycosylation" value="1 site, 1 O-linked glycan (1 site)"/>
</dbReference>
<dbReference type="iPTMnet" id="Q93084"/>
<dbReference type="PhosphoSitePlus" id="Q93084"/>
<dbReference type="SwissPalm" id="Q93084"/>
<dbReference type="BioMuta" id="ATP2A3"/>
<dbReference type="DMDM" id="19864659"/>
<dbReference type="jPOST" id="Q93084"/>
<dbReference type="MassIVE" id="Q93084"/>
<dbReference type="PaxDb" id="9606-ENSP00000353072"/>
<dbReference type="PeptideAtlas" id="Q93084"/>
<dbReference type="ProteomicsDB" id="75708">
    <molecule id="Q93084-1"/>
</dbReference>
<dbReference type="ProteomicsDB" id="75709">
    <molecule id="Q93084-2"/>
</dbReference>
<dbReference type="ProteomicsDB" id="75710">
    <molecule id="Q93084-3"/>
</dbReference>
<dbReference type="ProteomicsDB" id="75711">
    <molecule id="Q93084-4"/>
</dbReference>
<dbReference type="ProteomicsDB" id="75712">
    <molecule id="Q93084-5"/>
</dbReference>
<dbReference type="ProteomicsDB" id="75713">
    <molecule id="Q93084-6"/>
</dbReference>
<dbReference type="ProteomicsDB" id="75714">
    <molecule id="Q93084-7"/>
</dbReference>
<dbReference type="Pumba" id="Q93084"/>
<dbReference type="Antibodypedia" id="1517">
    <property type="antibodies" value="149 antibodies from 29 providers"/>
</dbReference>
<dbReference type="DNASU" id="489"/>
<dbReference type="Ensembl" id="ENST00000309890.11">
    <molecule id="Q93084-3"/>
    <property type="protein sequence ID" value="ENSP00000312577.7"/>
    <property type="gene ID" value="ENSG00000074370.19"/>
</dbReference>
<dbReference type="Ensembl" id="ENST00000352011.7">
    <molecule id="Q93084-1"/>
    <property type="protein sequence ID" value="ENSP00000301387.6"/>
    <property type="gene ID" value="ENSG00000074370.19"/>
</dbReference>
<dbReference type="Ensembl" id="ENST00000359983.7">
    <molecule id="Q93084-5"/>
    <property type="protein sequence ID" value="ENSP00000353072.3"/>
    <property type="gene ID" value="ENSG00000074370.19"/>
</dbReference>
<dbReference type="Ensembl" id="ENST00000397035.8">
    <molecule id="Q93084-3"/>
    <property type="protein sequence ID" value="ENSP00000380229.3"/>
    <property type="gene ID" value="ENSG00000074370.19"/>
</dbReference>
<dbReference type="Ensembl" id="ENST00000397041.8">
    <molecule id="Q93084-2"/>
    <property type="protein sequence ID" value="ENSP00000380234.3"/>
    <property type="gene ID" value="ENSG00000074370.19"/>
</dbReference>
<dbReference type="Ensembl" id="ENST00000397043.7">
    <molecule id="Q93084-4"/>
    <property type="protein sequence ID" value="ENSP00000380236.3"/>
    <property type="gene ID" value="ENSG00000074370.19"/>
</dbReference>
<dbReference type="GeneID" id="489"/>
<dbReference type="KEGG" id="hsa:489"/>
<dbReference type="MANE-Select" id="ENST00000397041.8">
    <property type="protein sequence ID" value="ENSP00000380234.3"/>
    <property type="RefSeq nucleotide sequence ID" value="NM_005173.4"/>
    <property type="RefSeq protein sequence ID" value="NP_005164.2"/>
</dbReference>
<dbReference type="UCSC" id="uc002fwx.3">
    <molecule id="Q93084-2"/>
    <property type="organism name" value="human"/>
</dbReference>
<dbReference type="AGR" id="HGNC:813"/>
<dbReference type="CTD" id="489"/>
<dbReference type="DisGeNET" id="489"/>
<dbReference type="GeneCards" id="ATP2A3"/>
<dbReference type="HGNC" id="HGNC:813">
    <property type="gene designation" value="ATP2A3"/>
</dbReference>
<dbReference type="HPA" id="ENSG00000074370">
    <property type="expression patterns" value="Tissue enhanced (lymphoid tissue, salivary gland)"/>
</dbReference>
<dbReference type="MIM" id="601929">
    <property type="type" value="gene"/>
</dbReference>
<dbReference type="neXtProt" id="NX_Q93084"/>
<dbReference type="OpenTargets" id="ENSG00000074370"/>
<dbReference type="PharmGKB" id="PA25106"/>
<dbReference type="VEuPathDB" id="HostDB:ENSG00000074370"/>
<dbReference type="eggNOG" id="KOG0202">
    <property type="taxonomic scope" value="Eukaryota"/>
</dbReference>
<dbReference type="GeneTree" id="ENSGT00940000155668"/>
<dbReference type="HOGENOM" id="CLU_002360_3_2_1"/>
<dbReference type="InParanoid" id="Q93084"/>
<dbReference type="OMA" id="VCCGQFD"/>
<dbReference type="OrthoDB" id="3352408at2759"/>
<dbReference type="PAN-GO" id="Q93084">
    <property type="GO annotations" value="4 GO annotations based on evolutionary models"/>
</dbReference>
<dbReference type="PhylomeDB" id="Q93084"/>
<dbReference type="TreeFam" id="TF300651"/>
<dbReference type="PathwayCommons" id="Q93084"/>
<dbReference type="Reactome" id="R-HSA-1912420">
    <property type="pathway name" value="Pre-NOTCH Processing in Golgi"/>
</dbReference>
<dbReference type="Reactome" id="R-HSA-418359">
    <property type="pathway name" value="Reduction of cytosolic Ca++ levels"/>
</dbReference>
<dbReference type="Reactome" id="R-HSA-5578775">
    <property type="pathway name" value="Ion homeostasis"/>
</dbReference>
<dbReference type="Reactome" id="R-HSA-936837">
    <property type="pathway name" value="Ion transport by P-type ATPases"/>
</dbReference>
<dbReference type="SignaLink" id="Q93084"/>
<dbReference type="SIGNOR" id="Q93084"/>
<dbReference type="BioGRID-ORCS" id="489">
    <property type="hits" value="8 hits in 1157 CRISPR screens"/>
</dbReference>
<dbReference type="ChiTaRS" id="ATP2A3">
    <property type="organism name" value="human"/>
</dbReference>
<dbReference type="GeneWiki" id="ATP2A3"/>
<dbReference type="GenomeRNAi" id="489"/>
<dbReference type="Pharos" id="Q93084">
    <property type="development level" value="Tchem"/>
</dbReference>
<dbReference type="PRO" id="PR:Q93084"/>
<dbReference type="Proteomes" id="UP000005640">
    <property type="component" value="Chromosome 17"/>
</dbReference>
<dbReference type="RNAct" id="Q93084">
    <property type="molecule type" value="protein"/>
</dbReference>
<dbReference type="Bgee" id="ENSG00000074370">
    <property type="expression patterns" value="Expressed in granulocyte and 144 other cell types or tissues"/>
</dbReference>
<dbReference type="ExpressionAtlas" id="Q93084">
    <property type="expression patterns" value="baseline and differential"/>
</dbReference>
<dbReference type="GO" id="GO:0005783">
    <property type="term" value="C:endoplasmic reticulum"/>
    <property type="evidence" value="ECO:0000314"/>
    <property type="project" value="UniProtKB"/>
</dbReference>
<dbReference type="GO" id="GO:0005789">
    <property type="term" value="C:endoplasmic reticulum membrane"/>
    <property type="evidence" value="ECO:0000304"/>
    <property type="project" value="Reactome"/>
</dbReference>
<dbReference type="GO" id="GO:0016020">
    <property type="term" value="C:membrane"/>
    <property type="evidence" value="ECO:0000318"/>
    <property type="project" value="GO_Central"/>
</dbReference>
<dbReference type="GO" id="GO:0031965">
    <property type="term" value="C:nuclear membrane"/>
    <property type="evidence" value="ECO:0007669"/>
    <property type="project" value="UniProtKB-SubCell"/>
</dbReference>
<dbReference type="GO" id="GO:0031090">
    <property type="term" value="C:organelle membrane"/>
    <property type="evidence" value="ECO:0000314"/>
    <property type="project" value="ARUK-UCL"/>
</dbReference>
<dbReference type="GO" id="GO:0031095">
    <property type="term" value="C:platelet dense tubular network membrane"/>
    <property type="evidence" value="ECO:0000304"/>
    <property type="project" value="Reactome"/>
</dbReference>
<dbReference type="GO" id="GO:0016529">
    <property type="term" value="C:sarcoplasmic reticulum"/>
    <property type="evidence" value="ECO:0000314"/>
    <property type="project" value="UniProtKB"/>
</dbReference>
<dbReference type="GO" id="GO:0033017">
    <property type="term" value="C:sarcoplasmic reticulum membrane"/>
    <property type="evidence" value="ECO:0007669"/>
    <property type="project" value="UniProtKB-SubCell"/>
</dbReference>
<dbReference type="GO" id="GO:0005524">
    <property type="term" value="F:ATP binding"/>
    <property type="evidence" value="ECO:0007669"/>
    <property type="project" value="UniProtKB-KW"/>
</dbReference>
<dbReference type="GO" id="GO:0016887">
    <property type="term" value="F:ATP hydrolysis activity"/>
    <property type="evidence" value="ECO:0007669"/>
    <property type="project" value="InterPro"/>
</dbReference>
<dbReference type="GO" id="GO:0005246">
    <property type="term" value="F:calcium channel regulator activity"/>
    <property type="evidence" value="ECO:0000315"/>
    <property type="project" value="ARUK-UCL"/>
</dbReference>
<dbReference type="GO" id="GO:0015085">
    <property type="term" value="F:calcium ion transmembrane transporter activity"/>
    <property type="evidence" value="ECO:0000314"/>
    <property type="project" value="ARUK-UCL"/>
</dbReference>
<dbReference type="GO" id="GO:0030899">
    <property type="term" value="F:calcium-dependent ATPase activity"/>
    <property type="evidence" value="ECO:0000314"/>
    <property type="project" value="ARUK-UCL"/>
</dbReference>
<dbReference type="GO" id="GO:0008656">
    <property type="term" value="F:cysteine-type endopeptidase activator activity involved in apoptotic process"/>
    <property type="evidence" value="ECO:0000314"/>
    <property type="project" value="ARUK-UCL"/>
</dbReference>
<dbReference type="GO" id="GO:0046872">
    <property type="term" value="F:metal ion binding"/>
    <property type="evidence" value="ECO:0007669"/>
    <property type="project" value="UniProtKB-KW"/>
</dbReference>
<dbReference type="GO" id="GO:0005388">
    <property type="term" value="F:P-type calcium transporter activity"/>
    <property type="evidence" value="ECO:0000314"/>
    <property type="project" value="ARUK-UCL"/>
</dbReference>
<dbReference type="GO" id="GO:0044325">
    <property type="term" value="F:transmembrane transporter binding"/>
    <property type="evidence" value="ECO:0000353"/>
    <property type="project" value="ARUK-UCL"/>
</dbReference>
<dbReference type="GO" id="GO:0070588">
    <property type="term" value="P:calcium ion transmembrane transport"/>
    <property type="evidence" value="ECO:0000314"/>
    <property type="project" value="ARUK-UCL"/>
</dbReference>
<dbReference type="GO" id="GO:0006816">
    <property type="term" value="P:calcium ion transport"/>
    <property type="evidence" value="ECO:0000304"/>
    <property type="project" value="UniProtKB"/>
</dbReference>
<dbReference type="GO" id="GO:1903515">
    <property type="term" value="P:calcium ion transport from cytosol to endoplasmic reticulum"/>
    <property type="evidence" value="ECO:0000314"/>
    <property type="project" value="ARUK-UCL"/>
</dbReference>
<dbReference type="GO" id="GO:0006874">
    <property type="term" value="P:intracellular calcium ion homeostasis"/>
    <property type="evidence" value="ECO:0000315"/>
    <property type="project" value="ARUK-UCL"/>
</dbReference>
<dbReference type="GO" id="GO:0070059">
    <property type="term" value="P:intrinsic apoptotic signaling pathway in response to endoplasmic reticulum stress"/>
    <property type="evidence" value="ECO:0000314"/>
    <property type="project" value="ARUK-UCL"/>
</dbReference>
<dbReference type="GO" id="GO:0034220">
    <property type="term" value="P:monoatomic ion transmembrane transport"/>
    <property type="evidence" value="ECO:0000304"/>
    <property type="project" value="Reactome"/>
</dbReference>
<dbReference type="GO" id="GO:1903779">
    <property type="term" value="P:regulation of cardiac conduction"/>
    <property type="evidence" value="ECO:0000304"/>
    <property type="project" value="Reactome"/>
</dbReference>
<dbReference type="GO" id="GO:0150104">
    <property type="term" value="P:transport across blood-brain barrier"/>
    <property type="evidence" value="ECO:0000303"/>
    <property type="project" value="ARUK-UCL"/>
</dbReference>
<dbReference type="CDD" id="cd02083">
    <property type="entry name" value="P-type_ATPase_SERCA"/>
    <property type="match status" value="1"/>
</dbReference>
<dbReference type="FunFam" id="3.40.1110.10:FF:000003">
    <property type="entry name" value="Calcium-transporting ATPase"/>
    <property type="match status" value="1"/>
</dbReference>
<dbReference type="FunFam" id="3.40.50.1000:FF:000005">
    <property type="entry name" value="Calcium-transporting ATPase 1"/>
    <property type="match status" value="1"/>
</dbReference>
<dbReference type="FunFam" id="1.20.1110.10:FF:000065">
    <property type="entry name" value="Sarcoplasmic/endoplasmic reticulum calcium ATPase 1"/>
    <property type="match status" value="3"/>
</dbReference>
<dbReference type="FunFam" id="2.70.150.10:FF:000160">
    <property type="entry name" value="Sarcoplasmic/endoplasmic reticulum calcium ATPase 1"/>
    <property type="match status" value="1"/>
</dbReference>
<dbReference type="Gene3D" id="3.40.1110.10">
    <property type="entry name" value="Calcium-transporting ATPase, cytoplasmic domain N"/>
    <property type="match status" value="1"/>
</dbReference>
<dbReference type="Gene3D" id="2.70.150.10">
    <property type="entry name" value="Calcium-transporting ATPase, cytoplasmic transduction domain A"/>
    <property type="match status" value="1"/>
</dbReference>
<dbReference type="Gene3D" id="1.20.1110.10">
    <property type="entry name" value="Calcium-transporting ATPase, transmembrane domain"/>
    <property type="match status" value="1"/>
</dbReference>
<dbReference type="Gene3D" id="3.40.50.1000">
    <property type="entry name" value="HAD superfamily/HAD-like"/>
    <property type="match status" value="1"/>
</dbReference>
<dbReference type="InterPro" id="IPR006068">
    <property type="entry name" value="ATPase_P-typ_cation-transptr_C"/>
</dbReference>
<dbReference type="InterPro" id="IPR004014">
    <property type="entry name" value="ATPase_P-typ_cation-transptr_N"/>
</dbReference>
<dbReference type="InterPro" id="IPR023299">
    <property type="entry name" value="ATPase_P-typ_cyto_dom_N"/>
</dbReference>
<dbReference type="InterPro" id="IPR018303">
    <property type="entry name" value="ATPase_P-typ_P_site"/>
</dbReference>
<dbReference type="InterPro" id="IPR023298">
    <property type="entry name" value="ATPase_P-typ_TM_dom_sf"/>
</dbReference>
<dbReference type="InterPro" id="IPR008250">
    <property type="entry name" value="ATPase_P-typ_transduc_dom_A_sf"/>
</dbReference>
<dbReference type="InterPro" id="IPR036412">
    <property type="entry name" value="HAD-like_sf"/>
</dbReference>
<dbReference type="InterPro" id="IPR023214">
    <property type="entry name" value="HAD_sf"/>
</dbReference>
<dbReference type="InterPro" id="IPR005782">
    <property type="entry name" value="P-type_ATPase_IIA"/>
</dbReference>
<dbReference type="InterPro" id="IPR001757">
    <property type="entry name" value="P_typ_ATPase"/>
</dbReference>
<dbReference type="InterPro" id="IPR044492">
    <property type="entry name" value="P_typ_ATPase_HD_dom"/>
</dbReference>
<dbReference type="NCBIfam" id="TIGR01116">
    <property type="entry name" value="ATPase-IIA1_Ca"/>
    <property type="match status" value="1"/>
</dbReference>
<dbReference type="NCBIfam" id="TIGR01494">
    <property type="entry name" value="ATPase_P-type"/>
    <property type="match status" value="2"/>
</dbReference>
<dbReference type="PANTHER" id="PTHR42861">
    <property type="entry name" value="CALCIUM-TRANSPORTING ATPASE"/>
    <property type="match status" value="1"/>
</dbReference>
<dbReference type="Pfam" id="PF13246">
    <property type="entry name" value="Cation_ATPase"/>
    <property type="match status" value="1"/>
</dbReference>
<dbReference type="Pfam" id="PF00689">
    <property type="entry name" value="Cation_ATPase_C"/>
    <property type="match status" value="1"/>
</dbReference>
<dbReference type="Pfam" id="PF00690">
    <property type="entry name" value="Cation_ATPase_N"/>
    <property type="match status" value="1"/>
</dbReference>
<dbReference type="Pfam" id="PF00122">
    <property type="entry name" value="E1-E2_ATPase"/>
    <property type="match status" value="1"/>
</dbReference>
<dbReference type="Pfam" id="PF00702">
    <property type="entry name" value="Hydrolase"/>
    <property type="match status" value="1"/>
</dbReference>
<dbReference type="PRINTS" id="PR00119">
    <property type="entry name" value="CATATPASE"/>
</dbReference>
<dbReference type="PRINTS" id="PR00120">
    <property type="entry name" value="HATPASE"/>
</dbReference>
<dbReference type="SFLD" id="SFLDS00003">
    <property type="entry name" value="Haloacid_Dehalogenase"/>
    <property type="match status" value="1"/>
</dbReference>
<dbReference type="SFLD" id="SFLDF00027">
    <property type="entry name" value="p-type_atpase"/>
    <property type="match status" value="1"/>
</dbReference>
<dbReference type="SMART" id="SM00831">
    <property type="entry name" value="Cation_ATPase_N"/>
    <property type="match status" value="1"/>
</dbReference>
<dbReference type="SUPFAM" id="SSF81653">
    <property type="entry name" value="Calcium ATPase, transduction domain A"/>
    <property type="match status" value="1"/>
</dbReference>
<dbReference type="SUPFAM" id="SSF81665">
    <property type="entry name" value="Calcium ATPase, transmembrane domain M"/>
    <property type="match status" value="1"/>
</dbReference>
<dbReference type="SUPFAM" id="SSF56784">
    <property type="entry name" value="HAD-like"/>
    <property type="match status" value="1"/>
</dbReference>
<dbReference type="SUPFAM" id="SSF81660">
    <property type="entry name" value="Metal cation-transporting ATPase, ATP-binding domain N"/>
    <property type="match status" value="1"/>
</dbReference>
<dbReference type="PROSITE" id="PS00154">
    <property type="entry name" value="ATPASE_E1_E2"/>
    <property type="match status" value="1"/>
</dbReference>
<feature type="chain" id="PRO_0000046202" description="Sarcoplasmic/endoplasmic reticulum calcium ATPase 3">
    <location>
        <begin position="1"/>
        <end position="999"/>
    </location>
</feature>
<feature type="topological domain" description="Cytoplasmic" evidence="1">
    <location>
        <begin position="1"/>
        <end position="48"/>
    </location>
</feature>
<feature type="transmembrane region" description="Helical; Name=1" evidence="1">
    <location>
        <begin position="49"/>
        <end position="69"/>
    </location>
</feature>
<feature type="topological domain" description="Lumenal" evidence="1">
    <location>
        <begin position="70"/>
        <end position="89"/>
    </location>
</feature>
<feature type="transmembrane region" description="Helical; Name=2" evidence="1">
    <location>
        <begin position="90"/>
        <end position="110"/>
    </location>
</feature>
<feature type="topological domain" description="Cytoplasmic" evidence="1">
    <location>
        <begin position="111"/>
        <end position="253"/>
    </location>
</feature>
<feature type="transmembrane region" description="Helical; Name=3" evidence="1">
    <location>
        <begin position="254"/>
        <end position="273"/>
    </location>
</feature>
<feature type="topological domain" description="Lumenal" evidence="1">
    <location>
        <begin position="274"/>
        <end position="295"/>
    </location>
</feature>
<feature type="transmembrane region" description="Helical; Name=4" evidence="1">
    <location>
        <begin position="296"/>
        <end position="313"/>
    </location>
</feature>
<feature type="topological domain" description="Cytoplasmic" evidence="1">
    <location>
        <begin position="314"/>
        <end position="757"/>
    </location>
</feature>
<feature type="transmembrane region" description="Helical; Name=5" evidence="1">
    <location>
        <begin position="758"/>
        <end position="777"/>
    </location>
</feature>
<feature type="topological domain" description="Lumenal" evidence="1">
    <location>
        <begin position="778"/>
        <end position="787"/>
    </location>
</feature>
<feature type="transmembrane region" description="Helical; Name=6" evidence="1">
    <location>
        <begin position="788"/>
        <end position="808"/>
    </location>
</feature>
<feature type="topological domain" description="Cytoplasmic" evidence="1">
    <location>
        <begin position="809"/>
        <end position="828"/>
    </location>
</feature>
<feature type="transmembrane region" description="Helical; Name=7" evidence="1">
    <location>
        <begin position="829"/>
        <end position="851"/>
    </location>
</feature>
<feature type="topological domain" description="Lumenal" evidence="1">
    <location>
        <begin position="852"/>
        <end position="897"/>
    </location>
</feature>
<feature type="transmembrane region" description="Helical; Name=8" evidence="1">
    <location>
        <begin position="898"/>
        <end position="917"/>
    </location>
</feature>
<feature type="topological domain" description="Cytoplasmic" evidence="1">
    <location>
        <begin position="918"/>
        <end position="930"/>
    </location>
</feature>
<feature type="transmembrane region" description="Helical; Name=9" evidence="1">
    <location>
        <begin position="931"/>
        <end position="949"/>
    </location>
</feature>
<feature type="topological domain" description="Lumenal" evidence="1">
    <location>
        <begin position="950"/>
        <end position="964"/>
    </location>
</feature>
<feature type="transmembrane region" description="Helical; Name=10" evidence="1">
    <location>
        <begin position="965"/>
        <end position="985"/>
    </location>
</feature>
<feature type="topological domain" description="Cytoplasmic" evidence="1">
    <location>
        <begin position="986"/>
        <end position="999"/>
    </location>
</feature>
<feature type="region of interest" description="Interaction with phospholamban 1" evidence="1">
    <location>
        <begin position="370"/>
        <end position="400"/>
    </location>
</feature>
<feature type="region of interest" description="Interaction with phospholamban 2" evidence="1">
    <location>
        <begin position="788"/>
        <end position="808"/>
    </location>
</feature>
<feature type="active site" description="4-aspartylphosphate intermediate" evidence="1">
    <location>
        <position position="351"/>
    </location>
</feature>
<feature type="binding site" evidence="1">
    <location>
        <position position="304"/>
    </location>
    <ligand>
        <name>Ca(2+)</name>
        <dbReference type="ChEBI" id="CHEBI:29108"/>
        <label>2</label>
    </ligand>
</feature>
<feature type="binding site" evidence="1">
    <location>
        <position position="305"/>
    </location>
    <ligand>
        <name>Ca(2+)</name>
        <dbReference type="ChEBI" id="CHEBI:29108"/>
        <label>2</label>
    </ligand>
</feature>
<feature type="binding site" evidence="1">
    <location>
        <position position="307"/>
    </location>
    <ligand>
        <name>Ca(2+)</name>
        <dbReference type="ChEBI" id="CHEBI:29108"/>
        <label>2</label>
    </ligand>
</feature>
<feature type="binding site" evidence="1">
    <location>
        <position position="309"/>
    </location>
    <ligand>
        <name>Ca(2+)</name>
        <dbReference type="ChEBI" id="CHEBI:29108"/>
        <label>2</label>
    </ligand>
</feature>
<feature type="binding site" evidence="1">
    <location>
        <position position="351"/>
    </location>
    <ligand>
        <name>Mg(2+)</name>
        <dbReference type="ChEBI" id="CHEBI:18420"/>
    </ligand>
</feature>
<feature type="binding site" evidence="1">
    <location>
        <position position="353"/>
    </location>
    <ligand>
        <name>ATP</name>
        <dbReference type="ChEBI" id="CHEBI:30616"/>
    </ligand>
</feature>
<feature type="binding site" evidence="1">
    <location>
        <position position="353"/>
    </location>
    <ligand>
        <name>Mg(2+)</name>
        <dbReference type="ChEBI" id="CHEBI:18420"/>
    </ligand>
</feature>
<feature type="binding site" evidence="1">
    <location>
        <position position="442"/>
    </location>
    <ligand>
        <name>ATP</name>
        <dbReference type="ChEBI" id="CHEBI:30616"/>
    </ligand>
</feature>
<feature type="binding site" evidence="1">
    <location>
        <position position="489"/>
    </location>
    <ligand>
        <name>ATP</name>
        <dbReference type="ChEBI" id="CHEBI:30616"/>
    </ligand>
</feature>
<feature type="binding site" evidence="1">
    <location>
        <position position="515"/>
    </location>
    <ligand>
        <name>ATP</name>
        <dbReference type="ChEBI" id="CHEBI:30616"/>
    </ligand>
</feature>
<feature type="binding site" evidence="1">
    <location>
        <position position="560"/>
    </location>
    <ligand>
        <name>ATP</name>
        <dbReference type="ChEBI" id="CHEBI:30616"/>
    </ligand>
</feature>
<feature type="binding site" evidence="1">
    <location>
        <position position="625"/>
    </location>
    <ligand>
        <name>ATP</name>
        <dbReference type="ChEBI" id="CHEBI:30616"/>
    </ligand>
</feature>
<feature type="binding site" evidence="1">
    <location>
        <position position="626"/>
    </location>
    <ligand>
        <name>ATP</name>
        <dbReference type="ChEBI" id="CHEBI:30616"/>
    </ligand>
</feature>
<feature type="binding site" evidence="1">
    <location>
        <position position="627"/>
    </location>
    <ligand>
        <name>ATP</name>
        <dbReference type="ChEBI" id="CHEBI:30616"/>
    </ligand>
</feature>
<feature type="binding site" evidence="1">
    <location>
        <position position="678"/>
    </location>
    <ligand>
        <name>ATP</name>
        <dbReference type="ChEBI" id="CHEBI:30616"/>
    </ligand>
</feature>
<feature type="binding site" evidence="1">
    <location>
        <position position="684"/>
    </location>
    <ligand>
        <name>ATP</name>
        <dbReference type="ChEBI" id="CHEBI:30616"/>
    </ligand>
</feature>
<feature type="binding site" evidence="1">
    <location>
        <position position="703"/>
    </location>
    <ligand>
        <name>Mg(2+)</name>
        <dbReference type="ChEBI" id="CHEBI:18420"/>
    </ligand>
</feature>
<feature type="binding site" evidence="1">
    <location>
        <position position="706"/>
    </location>
    <ligand>
        <name>ATP</name>
        <dbReference type="ChEBI" id="CHEBI:30616"/>
    </ligand>
</feature>
<feature type="binding site" evidence="1">
    <location>
        <position position="768"/>
    </location>
    <ligand>
        <name>Ca(2+)</name>
        <dbReference type="ChEBI" id="CHEBI:29108"/>
        <label>1</label>
    </ligand>
</feature>
<feature type="binding site" evidence="1">
    <location>
        <position position="771"/>
    </location>
    <ligand>
        <name>Ca(2+)</name>
        <dbReference type="ChEBI" id="CHEBI:29108"/>
        <label>1</label>
    </ligand>
</feature>
<feature type="binding site" evidence="1">
    <location>
        <position position="796"/>
    </location>
    <ligand>
        <name>Ca(2+)</name>
        <dbReference type="ChEBI" id="CHEBI:29108"/>
        <label>2</label>
    </ligand>
</feature>
<feature type="binding site" evidence="1">
    <location>
        <position position="799"/>
    </location>
    <ligand>
        <name>Ca(2+)</name>
        <dbReference type="ChEBI" id="CHEBI:29108"/>
        <label>1</label>
    </ligand>
</feature>
<feature type="binding site" evidence="1">
    <location>
        <position position="800"/>
    </location>
    <ligand>
        <name>Ca(2+)</name>
        <dbReference type="ChEBI" id="CHEBI:29108"/>
        <label>1</label>
    </ligand>
</feature>
<feature type="binding site" evidence="1">
    <location>
        <position position="800"/>
    </location>
    <ligand>
        <name>Ca(2+)</name>
        <dbReference type="ChEBI" id="CHEBI:29108"/>
        <label>2</label>
    </ligand>
</feature>
<feature type="binding site" evidence="1">
    <location>
        <position position="908"/>
    </location>
    <ligand>
        <name>Ca(2+)</name>
        <dbReference type="ChEBI" id="CHEBI:29108"/>
        <label>1</label>
    </ligand>
</feature>
<feature type="modified residue" description="N-acetylmethionine" evidence="5 10">
    <location>
        <position position="1"/>
    </location>
</feature>
<feature type="modified residue" description="Phosphoserine" evidence="2">
    <location>
        <position position="17"/>
    </location>
</feature>
<feature type="modified residue" description="Phosphothreonine" evidence="2">
    <location>
        <position position="19"/>
    </location>
</feature>
<feature type="modified residue" description="Phosphoserine" evidence="2">
    <location>
        <position position="25"/>
    </location>
</feature>
<feature type="modified residue" description="Phosphothreonine" evidence="2">
    <location>
        <position position="415"/>
    </location>
</feature>
<feature type="modified residue" description="Phosphoserine" evidence="13 14">
    <location>
        <position position="662"/>
    </location>
</feature>
<feature type="splice variant" id="VSP_060844" description="In isoform SERCA3E." evidence="11">
    <original>H</original>
    <variation>HACLYPGLLRTVSQAWSRQPLTTSWTPDHTGLASLGQGHSIVSLSELLREGGSR</variation>
    <location>
        <position position="993"/>
    </location>
</feature>
<feature type="splice variant" id="VSP_060845" description="In isoform SERCA3B." evidence="11">
    <original>EEMSQK</original>
    <variation>ACLYPGLLRTVSQAWSRQPLTTSWTPDHTGRNEPEVSAGNRVESPVCTSD</variation>
    <location>
        <begin position="994"/>
        <end position="999"/>
    </location>
</feature>
<feature type="splice variant" id="VSP_060846" description="In isoform SERCA3F." evidence="11">
    <original>EEMSQK</original>
    <variation>GPGTQHRLAVRAAQRGRKQGRNEPEVSAGNRVESPVCTSD</variation>
    <location>
        <begin position="994"/>
        <end position="999"/>
    </location>
</feature>
<feature type="splice variant" id="VSP_060847" description="In isoform SERCA3C." evidence="11">
    <original>EEMSQ</original>
    <variation>ACLYPGLLRTVSQAWSRQPLTTSWTPDHTGLASLK</variation>
    <location>
        <begin position="994"/>
        <end position="998"/>
    </location>
</feature>
<feature type="splice variant" id="VSP_060848" description="In isoform SERCA3D." evidence="11">
    <original>EEMSQ</original>
    <variation>ACLYPGLLRTVSQAWSRQPLTTSWTPDHTGARDTASSRCQSCSEREEAGK</variation>
    <location>
        <begin position="994"/>
        <end position="998"/>
    </location>
</feature>
<feature type="splice variant" id="VSP_060849" description="In isoform SERCA3G." evidence="11">
    <location>
        <position position="994"/>
    </location>
</feature>
<feature type="sequence variant" id="VAR_036498" description="In a breast cancer sample; somatic mutation; dbSNP:rs144535413." evidence="7">
    <original>R</original>
    <variation>H</variation>
    <location>
        <position position="674"/>
    </location>
</feature>
<feature type="sequence variant" id="VAR_048372" description="In dbSNP:rs11654827.">
    <original>Q</original>
    <variation>H</variation>
    <location>
        <position position="869"/>
    </location>
</feature>
<feature type="sequence conflict" description="In Ref. 4; AAC24525." evidence="11" ref="4">
    <original>A</original>
    <variation>T</variation>
    <location>
        <position position="673"/>
    </location>
</feature>
<feature type="sequence conflict" description="In Ref. 3; CAA75739." evidence="11" ref="3">
    <original>L</original>
    <variation>H</variation>
    <location>
        <position position="802"/>
    </location>
</feature>
<feature type="sequence conflict" description="In Ref. 1; CAA93737." evidence="11" ref="1">
    <original>M</original>
    <variation>I</variation>
    <location>
        <position position="817"/>
    </location>
</feature>
<protein>
    <recommendedName>
        <fullName evidence="11">Sarcoplasmic/endoplasmic reticulum calcium ATPase 3</fullName>
        <shortName>SERCA3</shortName>
        <shortName>SR Ca(2+)-ATPase 3</shortName>
        <ecNumber evidence="6">7.2.2.10</ecNumber>
    </recommendedName>
    <alternativeName>
        <fullName>Calcium pump 3</fullName>
    </alternativeName>
</protein>
<sequence>MEAAHLLPAADVLRHFSVTAEGGLSPAQVTGARERYGPNELPSEEGKSLWELVLEQFEDLLVRILLLAALVSFVLAWFEEGEETTTAFVEPLVIMLILVANAIVGVWQERNAESAIEALKEYEPEMGKVIRSDRKGVQRIRARDIVPGDIVEVAVGDKVPADLRLIEIKSTTLRVDQSILTGESVSVTKHTEAIPDPRAVNQDKKNMLFSGTNITSGKAVGVAVATGLHTELGKIRSQMAAVEPERTPLQRKLDEFGRQLSHAISVICVAVWVINIGHFADPAHGGSWLRGAVYYFKIAVALAVAAIPEGLPAVITTCLALGTRRMARKNAIVRSLPSVETLGCTSVICSDKTGTLTTNQMSVCRMFVVAEADAGSCLLHEFTISGTTYTPEGEVRQGDQPVRCGQFDGLVELATICALCNDSALDYNEAKGVYEKVGEATETALTCLVEKMNVFDTDLQALSRVERAGACNTVIKQLMRKEFTLEFSRDRKSMSVYCTPTRPHPTGQGSKMFVKGAPESVIERCSSVRVGSRTAPLTPTSREQILAKIRDWGSGSDTLRCLALATRDAPPRKEDMELDDCSKFVQYETDLTFVGCVGMLDPPRPEVAACITRCYQAGIRVVMITGDNKGTAVAICRRLGIFGDTEDVAGKAYTGREFDDLSPEQQRQACRTARCFARVEPAHKSRIVENLQSFNEITAMTGDGVNDAPALKKAEIGIAMGSGTAVAKSAAEMVLSDDNFASIVAAVEEGRAIYSNMKQFIRYLISSNVGEVVCIFLTAILGLPEALIPVQLLWVNLVTDGLPATALGFNPPDLDIMEKLPRSPREALISGWLFFRYLAIGVYVGLATVAAATWWFVYDAEGPHINFYQLRNFLKCSEDNPLFAGIDCEVFESRFPTTMALSVLVTIEMCNALNSVSENQSLLRMPPWMNPWLLVAVAMSMALHFLILLVPPLPLIFQVTPLSGRQWVVVLQISLPVILLDEALKYLSRNHMHEEMSQK</sequence>
<proteinExistence type="evidence at protein level"/>
<name>AT2A3_HUMAN</name>
<gene>
    <name evidence="12" type="primary">ATP2A3</name>
</gene>